<keyword id="KW-0067">ATP-binding</keyword>
<keyword id="KW-0997">Cell inner membrane</keyword>
<keyword id="KW-1003">Cell membrane</keyword>
<keyword id="KW-0472">Membrane</keyword>
<keyword id="KW-0547">Nucleotide-binding</keyword>
<keyword id="KW-1278">Translocase</keyword>
<keyword id="KW-0813">Transport</keyword>
<gene>
    <name evidence="1" type="primary">lolD</name>
    <name type="ordered locus">XAC2082</name>
</gene>
<organism>
    <name type="scientific">Xanthomonas axonopodis pv. citri (strain 306)</name>
    <dbReference type="NCBI Taxonomy" id="190486"/>
    <lineage>
        <taxon>Bacteria</taxon>
        <taxon>Pseudomonadati</taxon>
        <taxon>Pseudomonadota</taxon>
        <taxon>Gammaproteobacteria</taxon>
        <taxon>Lysobacterales</taxon>
        <taxon>Lysobacteraceae</taxon>
        <taxon>Xanthomonas</taxon>
    </lineage>
</organism>
<dbReference type="EC" id="7.6.2.-" evidence="1"/>
<dbReference type="EMBL" id="AE008923">
    <property type="protein sequence ID" value="AAM36939.1"/>
    <property type="status" value="ALT_INIT"/>
    <property type="molecule type" value="Genomic_DNA"/>
</dbReference>
<dbReference type="RefSeq" id="WP_015472015.1">
    <property type="nucleotide sequence ID" value="NC_003919.1"/>
</dbReference>
<dbReference type="SMR" id="Q8PKT0"/>
<dbReference type="GeneID" id="66911217"/>
<dbReference type="KEGG" id="xac:XAC2082"/>
<dbReference type="eggNOG" id="COG1136">
    <property type="taxonomic scope" value="Bacteria"/>
</dbReference>
<dbReference type="HOGENOM" id="CLU_000604_1_22_6"/>
<dbReference type="Proteomes" id="UP000000576">
    <property type="component" value="Chromosome"/>
</dbReference>
<dbReference type="GO" id="GO:0005886">
    <property type="term" value="C:plasma membrane"/>
    <property type="evidence" value="ECO:0007669"/>
    <property type="project" value="UniProtKB-SubCell"/>
</dbReference>
<dbReference type="GO" id="GO:0005524">
    <property type="term" value="F:ATP binding"/>
    <property type="evidence" value="ECO:0007669"/>
    <property type="project" value="UniProtKB-KW"/>
</dbReference>
<dbReference type="GO" id="GO:0016887">
    <property type="term" value="F:ATP hydrolysis activity"/>
    <property type="evidence" value="ECO:0007669"/>
    <property type="project" value="InterPro"/>
</dbReference>
<dbReference type="GO" id="GO:0022857">
    <property type="term" value="F:transmembrane transporter activity"/>
    <property type="evidence" value="ECO:0007669"/>
    <property type="project" value="TreeGrafter"/>
</dbReference>
<dbReference type="GO" id="GO:0044874">
    <property type="term" value="P:lipoprotein localization to outer membrane"/>
    <property type="evidence" value="ECO:0007669"/>
    <property type="project" value="TreeGrafter"/>
</dbReference>
<dbReference type="GO" id="GO:0089705">
    <property type="term" value="P:protein localization to outer membrane"/>
    <property type="evidence" value="ECO:0007669"/>
    <property type="project" value="TreeGrafter"/>
</dbReference>
<dbReference type="CDD" id="cd03255">
    <property type="entry name" value="ABC_MJ0796_LolCDE_FtsE"/>
    <property type="match status" value="1"/>
</dbReference>
<dbReference type="FunFam" id="3.40.50.300:FF:000230">
    <property type="entry name" value="Lipoprotein-releasing system ATP-binding protein LolD"/>
    <property type="match status" value="1"/>
</dbReference>
<dbReference type="Gene3D" id="3.40.50.300">
    <property type="entry name" value="P-loop containing nucleotide triphosphate hydrolases"/>
    <property type="match status" value="1"/>
</dbReference>
<dbReference type="InterPro" id="IPR003593">
    <property type="entry name" value="AAA+_ATPase"/>
</dbReference>
<dbReference type="InterPro" id="IPR003439">
    <property type="entry name" value="ABC_transporter-like_ATP-bd"/>
</dbReference>
<dbReference type="InterPro" id="IPR015854">
    <property type="entry name" value="ABC_transpr_LolD-like"/>
</dbReference>
<dbReference type="InterPro" id="IPR011924">
    <property type="entry name" value="LolD_lipo_ATP-bd"/>
</dbReference>
<dbReference type="InterPro" id="IPR017911">
    <property type="entry name" value="MacB-like_ATP-bd"/>
</dbReference>
<dbReference type="InterPro" id="IPR027417">
    <property type="entry name" value="P-loop_NTPase"/>
</dbReference>
<dbReference type="NCBIfam" id="TIGR02211">
    <property type="entry name" value="LolD_lipo_ex"/>
    <property type="match status" value="1"/>
</dbReference>
<dbReference type="PANTHER" id="PTHR24220">
    <property type="entry name" value="IMPORT ATP-BINDING PROTEIN"/>
    <property type="match status" value="1"/>
</dbReference>
<dbReference type="PANTHER" id="PTHR24220:SF689">
    <property type="entry name" value="LIPOPROTEIN-RELEASING SYSTEM ATP-BINDING PROTEIN LOLD"/>
    <property type="match status" value="1"/>
</dbReference>
<dbReference type="Pfam" id="PF00005">
    <property type="entry name" value="ABC_tran"/>
    <property type="match status" value="1"/>
</dbReference>
<dbReference type="SMART" id="SM00382">
    <property type="entry name" value="AAA"/>
    <property type="match status" value="1"/>
</dbReference>
<dbReference type="SUPFAM" id="SSF52540">
    <property type="entry name" value="P-loop containing nucleoside triphosphate hydrolases"/>
    <property type="match status" value="1"/>
</dbReference>
<dbReference type="PROSITE" id="PS50893">
    <property type="entry name" value="ABC_TRANSPORTER_2"/>
    <property type="match status" value="1"/>
</dbReference>
<dbReference type="PROSITE" id="PS51244">
    <property type="entry name" value="LOLD"/>
    <property type="match status" value="1"/>
</dbReference>
<feature type="chain" id="PRO_0000092468" description="Lipoprotein-releasing system ATP-binding protein LolD">
    <location>
        <begin position="1"/>
        <end position="244"/>
    </location>
</feature>
<feature type="domain" description="ABC transporter" evidence="1">
    <location>
        <begin position="19"/>
        <end position="244"/>
    </location>
</feature>
<feature type="binding site" evidence="1">
    <location>
        <begin position="55"/>
        <end position="62"/>
    </location>
    <ligand>
        <name>ATP</name>
        <dbReference type="ChEBI" id="CHEBI:30616"/>
    </ligand>
</feature>
<name>LOLD_XANAC</name>
<protein>
    <recommendedName>
        <fullName evidence="1">Lipoprotein-releasing system ATP-binding protein LolD</fullName>
        <ecNumber evidence="1">7.6.2.-</ecNumber>
    </recommendedName>
</protein>
<sequence>MNEIRETLVQTPKKATAVIRAEALAKTYAEGKMRTPVFDGLDLSVATGETVAIVGASGAGKSTLLHLLGGLDIPTSGEVYVAGERMSALSDAQRGKLRNQALGFVYQFHHLLPEFTALENVMMPVLLSGEDVAVAKSQALQLLESVGLGHRVEHKPSELSGGERQRCAVARALVNKPGCVLGDEPTGNLDDKTAGTVFELMLELNRAQRTSLVLVTHDRGLARRLDRVLELHQGKLRELAPSAV</sequence>
<reference key="1">
    <citation type="journal article" date="2002" name="Nature">
        <title>Comparison of the genomes of two Xanthomonas pathogens with differing host specificities.</title>
        <authorList>
            <person name="da Silva A.C.R."/>
            <person name="Ferro J.A."/>
            <person name="Reinach F.C."/>
            <person name="Farah C.S."/>
            <person name="Furlan L.R."/>
            <person name="Quaggio R.B."/>
            <person name="Monteiro-Vitorello C.B."/>
            <person name="Van Sluys M.A."/>
            <person name="Almeida N.F. Jr."/>
            <person name="Alves L.M.C."/>
            <person name="do Amaral A.M."/>
            <person name="Bertolini M.C."/>
            <person name="Camargo L.E.A."/>
            <person name="Camarotte G."/>
            <person name="Cannavan F."/>
            <person name="Cardozo J."/>
            <person name="Chambergo F."/>
            <person name="Ciapina L.P."/>
            <person name="Cicarelli R.M.B."/>
            <person name="Coutinho L.L."/>
            <person name="Cursino-Santos J.R."/>
            <person name="El-Dorry H."/>
            <person name="Faria J.B."/>
            <person name="Ferreira A.J.S."/>
            <person name="Ferreira R.C.C."/>
            <person name="Ferro M.I.T."/>
            <person name="Formighieri E.F."/>
            <person name="Franco M.C."/>
            <person name="Greggio C.C."/>
            <person name="Gruber A."/>
            <person name="Katsuyama A.M."/>
            <person name="Kishi L.T."/>
            <person name="Leite R.P."/>
            <person name="Lemos E.G.M."/>
            <person name="Lemos M.V.F."/>
            <person name="Locali E.C."/>
            <person name="Machado M.A."/>
            <person name="Madeira A.M.B.N."/>
            <person name="Martinez-Rossi N.M."/>
            <person name="Martins E.C."/>
            <person name="Meidanis J."/>
            <person name="Menck C.F.M."/>
            <person name="Miyaki C.Y."/>
            <person name="Moon D.H."/>
            <person name="Moreira L.M."/>
            <person name="Novo M.T.M."/>
            <person name="Okura V.K."/>
            <person name="Oliveira M.C."/>
            <person name="Oliveira V.R."/>
            <person name="Pereira H.A."/>
            <person name="Rossi A."/>
            <person name="Sena J.A.D."/>
            <person name="Silva C."/>
            <person name="de Souza R.F."/>
            <person name="Spinola L.A.F."/>
            <person name="Takita M.A."/>
            <person name="Tamura R.E."/>
            <person name="Teixeira E.C."/>
            <person name="Tezza R.I.D."/>
            <person name="Trindade dos Santos M."/>
            <person name="Truffi D."/>
            <person name="Tsai S.M."/>
            <person name="White F.F."/>
            <person name="Setubal J.C."/>
            <person name="Kitajima J.P."/>
        </authorList>
    </citation>
    <scope>NUCLEOTIDE SEQUENCE [LARGE SCALE GENOMIC DNA]</scope>
    <source>
        <strain>306</strain>
    </source>
</reference>
<accession>Q8PKT0</accession>
<evidence type="ECO:0000255" key="1">
    <source>
        <dbReference type="HAMAP-Rule" id="MF_01708"/>
    </source>
</evidence>
<evidence type="ECO:0000305" key="2"/>
<comment type="function">
    <text evidence="1">Part of the ABC transporter complex LolCDE involved in the translocation of mature outer membrane-directed lipoproteins, from the inner membrane to the periplasmic chaperone, LolA. Responsible for the formation of the LolA-lipoprotein complex in an ATP-dependent manner.</text>
</comment>
<comment type="subunit">
    <text evidence="1">The complex is composed of two ATP-binding proteins (LolD) and two transmembrane proteins (LolC and LolE).</text>
</comment>
<comment type="subcellular location">
    <subcellularLocation>
        <location evidence="1">Cell inner membrane</location>
        <topology evidence="1">Peripheral membrane protein</topology>
    </subcellularLocation>
</comment>
<comment type="similarity">
    <text evidence="1">Belongs to the ABC transporter superfamily. Lipoprotein translocase (TC 3.A.1.125) family.</text>
</comment>
<comment type="sequence caution" evidence="2">
    <conflict type="erroneous initiation">
        <sequence resource="EMBL-CDS" id="AAM36939"/>
    </conflict>
</comment>
<proteinExistence type="inferred from homology"/>